<accession>Q95709</accession>
<name>NU4LM_HYLLA</name>
<evidence type="ECO:0000250" key="1">
    <source>
        <dbReference type="UniProtKB" id="P03901"/>
    </source>
</evidence>
<evidence type="ECO:0000250" key="2">
    <source>
        <dbReference type="UniProtKB" id="P03902"/>
    </source>
</evidence>
<evidence type="ECO:0000255" key="3"/>
<evidence type="ECO:0000305" key="4"/>
<protein>
    <recommendedName>
        <fullName>NADH-ubiquinone oxidoreductase chain 4L</fullName>
        <ecNumber>7.1.1.2</ecNumber>
    </recommendedName>
    <alternativeName>
        <fullName>NADH dehydrogenase subunit 4L</fullName>
    </alternativeName>
</protein>
<feature type="chain" id="PRO_0000118433" description="NADH-ubiquinone oxidoreductase chain 4L">
    <location>
        <begin position="1"/>
        <end position="98"/>
    </location>
</feature>
<feature type="transmembrane region" description="Helical" evidence="3">
    <location>
        <begin position="1"/>
        <end position="21"/>
    </location>
</feature>
<feature type="transmembrane region" description="Helical" evidence="3">
    <location>
        <begin position="29"/>
        <end position="49"/>
    </location>
</feature>
<feature type="transmembrane region" description="Helical" evidence="3">
    <location>
        <begin position="61"/>
        <end position="81"/>
    </location>
</feature>
<comment type="function">
    <text evidence="1">Core subunit of the mitochondrial membrane respiratory chain NADH dehydrogenase (Complex I) which catalyzes electron transfer from NADH through the respiratory chain, using ubiquinone as an electron acceptor. Part of the enzyme membrane arm which is embedded in the lipid bilayer and involved in proton translocation.</text>
</comment>
<comment type="catalytic activity">
    <reaction evidence="1">
        <text>a ubiquinone + NADH + 5 H(+)(in) = a ubiquinol + NAD(+) + 4 H(+)(out)</text>
        <dbReference type="Rhea" id="RHEA:29091"/>
        <dbReference type="Rhea" id="RHEA-COMP:9565"/>
        <dbReference type="Rhea" id="RHEA-COMP:9566"/>
        <dbReference type="ChEBI" id="CHEBI:15378"/>
        <dbReference type="ChEBI" id="CHEBI:16389"/>
        <dbReference type="ChEBI" id="CHEBI:17976"/>
        <dbReference type="ChEBI" id="CHEBI:57540"/>
        <dbReference type="ChEBI" id="CHEBI:57945"/>
        <dbReference type="EC" id="7.1.1.2"/>
    </reaction>
    <physiologicalReaction direction="left-to-right" evidence="1">
        <dbReference type="Rhea" id="RHEA:29092"/>
    </physiologicalReaction>
</comment>
<comment type="subunit">
    <text evidence="2">Core subunit of respiratory chain NADH dehydrogenase (Complex I) which is composed of 45 different subunits.</text>
</comment>
<comment type="subcellular location">
    <subcellularLocation>
        <location evidence="2">Mitochondrion inner membrane</location>
        <topology evidence="3">Multi-pass membrane protein</topology>
    </subcellularLocation>
</comment>
<comment type="similarity">
    <text evidence="4">Belongs to the complex I subunit 4L family.</text>
</comment>
<keyword id="KW-0249">Electron transport</keyword>
<keyword id="KW-0472">Membrane</keyword>
<keyword id="KW-0496">Mitochondrion</keyword>
<keyword id="KW-0999">Mitochondrion inner membrane</keyword>
<keyword id="KW-0520">NAD</keyword>
<keyword id="KW-0679">Respiratory chain</keyword>
<keyword id="KW-1278">Translocase</keyword>
<keyword id="KW-0812">Transmembrane</keyword>
<keyword id="KW-1133">Transmembrane helix</keyword>
<keyword id="KW-0813">Transport</keyword>
<keyword id="KW-0830">Ubiquinone</keyword>
<reference key="1">
    <citation type="journal article" date="1996" name="Hereditas">
        <title>A complete mitochondrial DNA molecule of the white-handed gibbon, Hylobates lar, and comparison among individual mitochondrial genes of all hominoid genera.</title>
        <authorList>
            <person name="Arnason U."/>
            <person name="Gullberg A."/>
            <person name="Xu X."/>
        </authorList>
    </citation>
    <scope>NUCLEOTIDE SEQUENCE [GENOMIC DNA]</scope>
    <source>
        <strain>Isolate Ester</strain>
    </source>
</reference>
<gene>
    <name type="primary">MT-ND4L</name>
    <name type="synonym">MTND4L</name>
    <name type="synonym">NADH4L</name>
    <name type="synonym">ND4L</name>
</gene>
<geneLocation type="mitochondrion"/>
<dbReference type="EC" id="7.1.1.2"/>
<dbReference type="EMBL" id="X99256">
    <property type="protein sequence ID" value="CAA67636.1"/>
    <property type="molecule type" value="Genomic_DNA"/>
</dbReference>
<dbReference type="PIR" id="T11841">
    <property type="entry name" value="T11841"/>
</dbReference>
<dbReference type="RefSeq" id="NP_007830.1">
    <property type="nucleotide sequence ID" value="NC_002082.1"/>
</dbReference>
<dbReference type="SMR" id="Q95709"/>
<dbReference type="GeneID" id="808462"/>
<dbReference type="CTD" id="4539"/>
<dbReference type="GO" id="GO:0005743">
    <property type="term" value="C:mitochondrial inner membrane"/>
    <property type="evidence" value="ECO:0000250"/>
    <property type="project" value="UniProtKB"/>
</dbReference>
<dbReference type="GO" id="GO:0045271">
    <property type="term" value="C:respiratory chain complex I"/>
    <property type="evidence" value="ECO:0000250"/>
    <property type="project" value="UniProtKB"/>
</dbReference>
<dbReference type="GO" id="GO:0008137">
    <property type="term" value="F:NADH dehydrogenase (ubiquinone) activity"/>
    <property type="evidence" value="ECO:0000250"/>
    <property type="project" value="UniProtKB"/>
</dbReference>
<dbReference type="GO" id="GO:0042773">
    <property type="term" value="P:ATP synthesis coupled electron transport"/>
    <property type="evidence" value="ECO:0007669"/>
    <property type="project" value="InterPro"/>
</dbReference>
<dbReference type="FunFam" id="1.10.287.3510:FF:000002">
    <property type="entry name" value="NADH-ubiquinone oxidoreductase chain 4L"/>
    <property type="match status" value="1"/>
</dbReference>
<dbReference type="Gene3D" id="1.10.287.3510">
    <property type="match status" value="1"/>
</dbReference>
<dbReference type="InterPro" id="IPR001133">
    <property type="entry name" value="NADH_UbQ_OxRdtase_chain4L/K"/>
</dbReference>
<dbReference type="InterPro" id="IPR039428">
    <property type="entry name" value="NUOK/Mnh_C1-like"/>
</dbReference>
<dbReference type="PANTHER" id="PTHR11434:SF0">
    <property type="entry name" value="NADH-UBIQUINONE OXIDOREDUCTASE CHAIN 4L"/>
    <property type="match status" value="1"/>
</dbReference>
<dbReference type="PANTHER" id="PTHR11434">
    <property type="entry name" value="NADH-UBIQUINONE OXIDOREDUCTASE SUBUNIT ND4L"/>
    <property type="match status" value="1"/>
</dbReference>
<dbReference type="Pfam" id="PF00420">
    <property type="entry name" value="Oxidored_q2"/>
    <property type="match status" value="1"/>
</dbReference>
<proteinExistence type="inferred from homology"/>
<sequence>MPLIYMNITLAFAISLLGMLIYRSHLMSSLLCLEGMMLSLFIMSTLMALNTHSLLINIMPVVLLVFAACEAAVGLALLVSISNTYGLDHIHNLNLLQC</sequence>
<organism>
    <name type="scientific">Hylobates lar</name>
    <name type="common">Lar gibbon</name>
    <name type="synonym">White-handed gibbon</name>
    <dbReference type="NCBI Taxonomy" id="9580"/>
    <lineage>
        <taxon>Eukaryota</taxon>
        <taxon>Metazoa</taxon>
        <taxon>Chordata</taxon>
        <taxon>Craniata</taxon>
        <taxon>Vertebrata</taxon>
        <taxon>Euteleostomi</taxon>
        <taxon>Mammalia</taxon>
        <taxon>Eutheria</taxon>
        <taxon>Euarchontoglires</taxon>
        <taxon>Primates</taxon>
        <taxon>Haplorrhini</taxon>
        <taxon>Catarrhini</taxon>
        <taxon>Hylobatidae</taxon>
        <taxon>Hylobates</taxon>
    </lineage>
</organism>